<organism>
    <name type="scientific">Francisella philomiragia subsp. philomiragia (strain ATCC 25017 / CCUG 19701 / FSC 153 / O#319-036)</name>
    <dbReference type="NCBI Taxonomy" id="484022"/>
    <lineage>
        <taxon>Bacteria</taxon>
        <taxon>Pseudomonadati</taxon>
        <taxon>Pseudomonadota</taxon>
        <taxon>Gammaproteobacteria</taxon>
        <taxon>Thiotrichales</taxon>
        <taxon>Francisellaceae</taxon>
        <taxon>Francisella</taxon>
    </lineage>
</organism>
<feature type="chain" id="PRO_1000083927" description="Acetyl-coenzyme A carboxylase carboxyl transferase subunit alpha">
    <location>
        <begin position="1"/>
        <end position="315"/>
    </location>
</feature>
<feature type="domain" description="CoA carboxyltransferase C-terminal" evidence="2">
    <location>
        <begin position="36"/>
        <end position="289"/>
    </location>
</feature>
<proteinExistence type="inferred from homology"/>
<reference key="1">
    <citation type="submission" date="2007-12" db="EMBL/GenBank/DDBJ databases">
        <title>Complete sequence of chromosome of Francisella philomiragia subsp. philomiragia ATCC 25017.</title>
        <authorList>
            <consortium name="US DOE Joint Genome Institute"/>
            <person name="Copeland A."/>
            <person name="Lucas S."/>
            <person name="Lapidus A."/>
            <person name="Barry K."/>
            <person name="Detter J.C."/>
            <person name="Glavina del Rio T."/>
            <person name="Hammon N."/>
            <person name="Israni S."/>
            <person name="Dalin E."/>
            <person name="Tice H."/>
            <person name="Pitluck S."/>
            <person name="Chain P."/>
            <person name="Malfatti S."/>
            <person name="Shin M."/>
            <person name="Vergez L."/>
            <person name="Schmutz J."/>
            <person name="Larimer F."/>
            <person name="Land M."/>
            <person name="Hauser L."/>
            <person name="Richardson P."/>
        </authorList>
    </citation>
    <scope>NUCLEOTIDE SEQUENCE [LARGE SCALE GENOMIC DNA]</scope>
    <source>
        <strain>ATCC 25017 / CCUG 19701 / FSC 153 / O#319-036</strain>
    </source>
</reference>
<evidence type="ECO:0000255" key="1">
    <source>
        <dbReference type="HAMAP-Rule" id="MF_00823"/>
    </source>
</evidence>
<evidence type="ECO:0000255" key="2">
    <source>
        <dbReference type="PROSITE-ProRule" id="PRU01137"/>
    </source>
</evidence>
<dbReference type="EC" id="2.1.3.15" evidence="1"/>
<dbReference type="EMBL" id="CP000937">
    <property type="protein sequence ID" value="ABZ87358.1"/>
    <property type="molecule type" value="Genomic_DNA"/>
</dbReference>
<dbReference type="SMR" id="B0TXA0"/>
<dbReference type="KEGG" id="fph:Fphi_1134"/>
<dbReference type="eggNOG" id="COG0825">
    <property type="taxonomic scope" value="Bacteria"/>
</dbReference>
<dbReference type="HOGENOM" id="CLU_015486_0_2_6"/>
<dbReference type="UniPathway" id="UPA00655">
    <property type="reaction ID" value="UER00711"/>
</dbReference>
<dbReference type="GO" id="GO:0009317">
    <property type="term" value="C:acetyl-CoA carboxylase complex"/>
    <property type="evidence" value="ECO:0007669"/>
    <property type="project" value="InterPro"/>
</dbReference>
<dbReference type="GO" id="GO:0003989">
    <property type="term" value="F:acetyl-CoA carboxylase activity"/>
    <property type="evidence" value="ECO:0007669"/>
    <property type="project" value="InterPro"/>
</dbReference>
<dbReference type="GO" id="GO:0005524">
    <property type="term" value="F:ATP binding"/>
    <property type="evidence" value="ECO:0007669"/>
    <property type="project" value="UniProtKB-KW"/>
</dbReference>
<dbReference type="GO" id="GO:0016743">
    <property type="term" value="F:carboxyl- or carbamoyltransferase activity"/>
    <property type="evidence" value="ECO:0007669"/>
    <property type="project" value="UniProtKB-UniRule"/>
</dbReference>
<dbReference type="GO" id="GO:0006633">
    <property type="term" value="P:fatty acid biosynthetic process"/>
    <property type="evidence" value="ECO:0007669"/>
    <property type="project" value="UniProtKB-KW"/>
</dbReference>
<dbReference type="GO" id="GO:2001295">
    <property type="term" value="P:malonyl-CoA biosynthetic process"/>
    <property type="evidence" value="ECO:0007669"/>
    <property type="project" value="UniProtKB-UniRule"/>
</dbReference>
<dbReference type="Gene3D" id="3.90.226.10">
    <property type="entry name" value="2-enoyl-CoA Hydratase, Chain A, domain 1"/>
    <property type="match status" value="1"/>
</dbReference>
<dbReference type="HAMAP" id="MF_00823">
    <property type="entry name" value="AcetylCoA_CT_alpha"/>
    <property type="match status" value="1"/>
</dbReference>
<dbReference type="InterPro" id="IPR001095">
    <property type="entry name" value="Acetyl_CoA_COase_a_su"/>
</dbReference>
<dbReference type="InterPro" id="IPR029045">
    <property type="entry name" value="ClpP/crotonase-like_dom_sf"/>
</dbReference>
<dbReference type="InterPro" id="IPR011763">
    <property type="entry name" value="COA_CT_C"/>
</dbReference>
<dbReference type="NCBIfam" id="TIGR00513">
    <property type="entry name" value="accA"/>
    <property type="match status" value="1"/>
</dbReference>
<dbReference type="NCBIfam" id="NF041504">
    <property type="entry name" value="AccA_sub"/>
    <property type="match status" value="1"/>
</dbReference>
<dbReference type="NCBIfam" id="NF004344">
    <property type="entry name" value="PRK05724.1"/>
    <property type="match status" value="1"/>
</dbReference>
<dbReference type="PANTHER" id="PTHR42853">
    <property type="entry name" value="ACETYL-COENZYME A CARBOXYLASE CARBOXYL TRANSFERASE SUBUNIT ALPHA"/>
    <property type="match status" value="1"/>
</dbReference>
<dbReference type="PANTHER" id="PTHR42853:SF3">
    <property type="entry name" value="ACETYL-COENZYME A CARBOXYLASE CARBOXYL TRANSFERASE SUBUNIT ALPHA, CHLOROPLASTIC"/>
    <property type="match status" value="1"/>
</dbReference>
<dbReference type="Pfam" id="PF03255">
    <property type="entry name" value="ACCA"/>
    <property type="match status" value="1"/>
</dbReference>
<dbReference type="PRINTS" id="PR01069">
    <property type="entry name" value="ACCCTRFRASEA"/>
</dbReference>
<dbReference type="SUPFAM" id="SSF52096">
    <property type="entry name" value="ClpP/crotonase"/>
    <property type="match status" value="1"/>
</dbReference>
<dbReference type="PROSITE" id="PS50989">
    <property type="entry name" value="COA_CT_CTER"/>
    <property type="match status" value="1"/>
</dbReference>
<protein>
    <recommendedName>
        <fullName evidence="1">Acetyl-coenzyme A carboxylase carboxyl transferase subunit alpha</fullName>
        <shortName evidence="1">ACCase subunit alpha</shortName>
        <shortName evidence="1">Acetyl-CoA carboxylase carboxyltransferase subunit alpha</shortName>
        <ecNumber evidence="1">2.1.3.15</ecNumber>
    </recommendedName>
</protein>
<sequence length="315" mass="35240">MNYLDFESKIKEIEDKITSLSHVYEDEKTESEIKKLGKKRLELMESTYSKLTDWQVVQLSRHPDRPYFKDLLSLVFTDFQELHGDRAFGDDLAVIGGLAKLNNKPVMVIGQEKGRDTKSKIKHNFGMMHPEGYRKALRLMKLAEKFNMPIVTFIDTPGAYPGIKAEERGQSEAIARNLLEMSALKVPVVCIVIGEGCSGGALGIGVGDRLLMLQYSYFATISPEGCASILHKTAEKASEVTQMMNITSGRLKELEIVDAVIPEPLGGAHRDYDTTAANIRKAVAAELKVLSEMTVEERNAKRYDKLMSFGRFKEA</sequence>
<gene>
    <name evidence="1" type="primary">accA</name>
    <name type="ordered locus">Fphi_1134</name>
</gene>
<name>ACCA_FRAP2</name>
<accession>B0TXA0</accession>
<keyword id="KW-0067">ATP-binding</keyword>
<keyword id="KW-0963">Cytoplasm</keyword>
<keyword id="KW-0275">Fatty acid biosynthesis</keyword>
<keyword id="KW-0276">Fatty acid metabolism</keyword>
<keyword id="KW-0444">Lipid biosynthesis</keyword>
<keyword id="KW-0443">Lipid metabolism</keyword>
<keyword id="KW-0547">Nucleotide-binding</keyword>
<keyword id="KW-0808">Transferase</keyword>
<comment type="function">
    <text evidence="1">Component of the acetyl coenzyme A carboxylase (ACC) complex. First, biotin carboxylase catalyzes the carboxylation of biotin on its carrier protein (BCCP) and then the CO(2) group is transferred by the carboxyltransferase to acetyl-CoA to form malonyl-CoA.</text>
</comment>
<comment type="catalytic activity">
    <reaction evidence="1">
        <text>N(6)-carboxybiotinyl-L-lysyl-[protein] + acetyl-CoA = N(6)-biotinyl-L-lysyl-[protein] + malonyl-CoA</text>
        <dbReference type="Rhea" id="RHEA:54728"/>
        <dbReference type="Rhea" id="RHEA-COMP:10505"/>
        <dbReference type="Rhea" id="RHEA-COMP:10506"/>
        <dbReference type="ChEBI" id="CHEBI:57288"/>
        <dbReference type="ChEBI" id="CHEBI:57384"/>
        <dbReference type="ChEBI" id="CHEBI:83144"/>
        <dbReference type="ChEBI" id="CHEBI:83145"/>
        <dbReference type="EC" id="2.1.3.15"/>
    </reaction>
</comment>
<comment type="pathway">
    <text evidence="1">Lipid metabolism; malonyl-CoA biosynthesis; malonyl-CoA from acetyl-CoA: step 1/1.</text>
</comment>
<comment type="subunit">
    <text evidence="1">Acetyl-CoA carboxylase is a heterohexamer composed of biotin carboxyl carrier protein (AccB), biotin carboxylase (AccC) and two subunits each of ACCase subunit alpha (AccA) and ACCase subunit beta (AccD).</text>
</comment>
<comment type="subcellular location">
    <subcellularLocation>
        <location evidence="1">Cytoplasm</location>
    </subcellularLocation>
</comment>
<comment type="similarity">
    <text evidence="1">Belongs to the AccA family.</text>
</comment>